<organism>
    <name type="scientific">Serratia proteamaculans (strain 568)</name>
    <dbReference type="NCBI Taxonomy" id="399741"/>
    <lineage>
        <taxon>Bacteria</taxon>
        <taxon>Pseudomonadati</taxon>
        <taxon>Pseudomonadota</taxon>
        <taxon>Gammaproteobacteria</taxon>
        <taxon>Enterobacterales</taxon>
        <taxon>Yersiniaceae</taxon>
        <taxon>Serratia</taxon>
    </lineage>
</organism>
<name>METJ_SERP5</name>
<sequence>MAEWNGEYVSPYAEHGKKSEQVKKITVSIPLKVLKILTDERTRRQVNNLRHATNSELLCEAFLHAFTGQPLPNDEDLRKERSDEIPEAAKLLMRELGVDPDTWEY</sequence>
<gene>
    <name evidence="1" type="primary">metJ</name>
    <name type="ordered locus">Spro_4787</name>
</gene>
<protein>
    <recommendedName>
        <fullName evidence="1">Met repressor</fullName>
    </recommendedName>
    <alternativeName>
        <fullName evidence="1">Met regulon regulatory protein MetJ</fullName>
    </alternativeName>
</protein>
<feature type="chain" id="PRO_1000062173" description="Met repressor">
    <location>
        <begin position="1"/>
        <end position="105"/>
    </location>
</feature>
<reference key="1">
    <citation type="submission" date="2007-09" db="EMBL/GenBank/DDBJ databases">
        <title>Complete sequence of chromosome of Serratia proteamaculans 568.</title>
        <authorList>
            <consortium name="US DOE Joint Genome Institute"/>
            <person name="Copeland A."/>
            <person name="Lucas S."/>
            <person name="Lapidus A."/>
            <person name="Barry K."/>
            <person name="Glavina del Rio T."/>
            <person name="Dalin E."/>
            <person name="Tice H."/>
            <person name="Pitluck S."/>
            <person name="Chain P."/>
            <person name="Malfatti S."/>
            <person name="Shin M."/>
            <person name="Vergez L."/>
            <person name="Schmutz J."/>
            <person name="Larimer F."/>
            <person name="Land M."/>
            <person name="Hauser L."/>
            <person name="Kyrpides N."/>
            <person name="Kim E."/>
            <person name="Taghavi S."/>
            <person name="Newman L."/>
            <person name="Vangronsveld J."/>
            <person name="van der Lelie D."/>
            <person name="Richardson P."/>
        </authorList>
    </citation>
    <scope>NUCLEOTIDE SEQUENCE [LARGE SCALE GENOMIC DNA]</scope>
    <source>
        <strain>568</strain>
    </source>
</reference>
<evidence type="ECO:0000255" key="1">
    <source>
        <dbReference type="HAMAP-Rule" id="MF_00744"/>
    </source>
</evidence>
<keyword id="KW-0028">Amino-acid biosynthesis</keyword>
<keyword id="KW-0963">Cytoplasm</keyword>
<keyword id="KW-0238">DNA-binding</keyword>
<keyword id="KW-0486">Methionine biosynthesis</keyword>
<keyword id="KW-0678">Repressor</keyword>
<keyword id="KW-0804">Transcription</keyword>
<keyword id="KW-0805">Transcription regulation</keyword>
<comment type="function">
    <text evidence="1">This regulatory protein, when combined with SAM (S-adenosylmethionine) represses the expression of the methionine regulon and of enzymes involved in SAM synthesis.</text>
</comment>
<comment type="subunit">
    <text evidence="1">Homodimer.</text>
</comment>
<comment type="subcellular location">
    <subcellularLocation>
        <location evidence="1">Cytoplasm</location>
    </subcellularLocation>
</comment>
<comment type="domain">
    <text>Does not bind DNA by a helix-turn-helix motif.</text>
</comment>
<comment type="similarity">
    <text evidence="1">Belongs to the MetJ family.</text>
</comment>
<dbReference type="EMBL" id="CP000826">
    <property type="protein sequence ID" value="ABV43880.1"/>
    <property type="molecule type" value="Genomic_DNA"/>
</dbReference>
<dbReference type="SMR" id="A8GL90"/>
<dbReference type="STRING" id="399741.Spro_4787"/>
<dbReference type="KEGG" id="spe:Spro_4787"/>
<dbReference type="eggNOG" id="COG3060">
    <property type="taxonomic scope" value="Bacteria"/>
</dbReference>
<dbReference type="HOGENOM" id="CLU_142318_0_0_6"/>
<dbReference type="OrthoDB" id="5680896at2"/>
<dbReference type="GO" id="GO:0005737">
    <property type="term" value="C:cytoplasm"/>
    <property type="evidence" value="ECO:0007669"/>
    <property type="project" value="UniProtKB-SubCell"/>
</dbReference>
<dbReference type="GO" id="GO:0003677">
    <property type="term" value="F:DNA binding"/>
    <property type="evidence" value="ECO:0007669"/>
    <property type="project" value="UniProtKB-KW"/>
</dbReference>
<dbReference type="GO" id="GO:0003700">
    <property type="term" value="F:DNA-binding transcription factor activity"/>
    <property type="evidence" value="ECO:0007669"/>
    <property type="project" value="InterPro"/>
</dbReference>
<dbReference type="GO" id="GO:0009086">
    <property type="term" value="P:methionine biosynthetic process"/>
    <property type="evidence" value="ECO:0007669"/>
    <property type="project" value="UniProtKB-UniRule"/>
</dbReference>
<dbReference type="GO" id="GO:0045892">
    <property type="term" value="P:negative regulation of DNA-templated transcription"/>
    <property type="evidence" value="ECO:0007669"/>
    <property type="project" value="UniProtKB-UniRule"/>
</dbReference>
<dbReference type="CDD" id="cd00490">
    <property type="entry name" value="Met_repressor_MetJ"/>
    <property type="match status" value="1"/>
</dbReference>
<dbReference type="FunFam" id="1.10.140.10:FF:000001">
    <property type="entry name" value="Met repressor"/>
    <property type="match status" value="1"/>
</dbReference>
<dbReference type="Gene3D" id="1.10.140.10">
    <property type="entry name" value="MET Apo-Repressor, subunit A"/>
    <property type="match status" value="1"/>
</dbReference>
<dbReference type="HAMAP" id="MF_00744">
    <property type="entry name" value="MetJ"/>
    <property type="match status" value="1"/>
</dbReference>
<dbReference type="InterPro" id="IPR002084">
    <property type="entry name" value="Met_repressor_MetJ"/>
</dbReference>
<dbReference type="InterPro" id="IPR023453">
    <property type="entry name" value="Met_repressor_MetJ_dom_sf"/>
</dbReference>
<dbReference type="InterPro" id="IPR010985">
    <property type="entry name" value="Ribbon_hlx_hlx"/>
</dbReference>
<dbReference type="NCBIfam" id="NF003622">
    <property type="entry name" value="PRK05264.1"/>
    <property type="match status" value="1"/>
</dbReference>
<dbReference type="Pfam" id="PF01340">
    <property type="entry name" value="MetJ"/>
    <property type="match status" value="1"/>
</dbReference>
<dbReference type="SUPFAM" id="SSF47598">
    <property type="entry name" value="Ribbon-helix-helix"/>
    <property type="match status" value="1"/>
</dbReference>
<accession>A8GL90</accession>
<proteinExistence type="inferred from homology"/>